<accession>Q54CR9</accession>
<evidence type="ECO:0000250" key="1">
    <source>
        <dbReference type="UniProtKB" id="P18858"/>
    </source>
</evidence>
<evidence type="ECO:0000250" key="2">
    <source>
        <dbReference type="UniProtKB" id="P49917"/>
    </source>
</evidence>
<evidence type="ECO:0000250" key="3">
    <source>
        <dbReference type="UniProtKB" id="Q08387"/>
    </source>
</evidence>
<evidence type="ECO:0000255" key="4"/>
<evidence type="ECO:0000255" key="5">
    <source>
        <dbReference type="PROSITE-ProRule" id="PRU00033"/>
    </source>
</evidence>
<evidence type="ECO:0000255" key="6">
    <source>
        <dbReference type="PROSITE-ProRule" id="PRU10135"/>
    </source>
</evidence>
<evidence type="ECO:0000256" key="7">
    <source>
        <dbReference type="SAM" id="MobiDB-lite"/>
    </source>
</evidence>
<evidence type="ECO:0000305" key="8"/>
<organism>
    <name type="scientific">Dictyostelium discoideum</name>
    <name type="common">Social amoeba</name>
    <dbReference type="NCBI Taxonomy" id="44689"/>
    <lineage>
        <taxon>Eukaryota</taxon>
        <taxon>Amoebozoa</taxon>
        <taxon>Evosea</taxon>
        <taxon>Eumycetozoa</taxon>
        <taxon>Dictyostelia</taxon>
        <taxon>Dictyosteliales</taxon>
        <taxon>Dictyosteliaceae</taxon>
        <taxon>Dictyostelium</taxon>
    </lineage>
</organism>
<name>DNLI4_DICDI</name>
<feature type="chain" id="PRO_0000351216" description="DNA ligase 4">
    <location>
        <begin position="1"/>
        <end position="1088"/>
    </location>
</feature>
<feature type="domain" description="BRCT 1" evidence="5">
    <location>
        <begin position="827"/>
        <end position="917"/>
    </location>
</feature>
<feature type="domain" description="BRCT 2" evidence="5">
    <location>
        <begin position="984"/>
        <end position="1088"/>
    </location>
</feature>
<feature type="region of interest" description="Disordered" evidence="7">
    <location>
        <begin position="1"/>
        <end position="56"/>
    </location>
</feature>
<feature type="region of interest" description="Disordered" evidence="7">
    <location>
        <begin position="73"/>
        <end position="117"/>
    </location>
</feature>
<feature type="compositionally biased region" description="Low complexity" evidence="7">
    <location>
        <begin position="25"/>
        <end position="53"/>
    </location>
</feature>
<feature type="compositionally biased region" description="Low complexity" evidence="7">
    <location>
        <begin position="73"/>
        <end position="90"/>
    </location>
</feature>
<feature type="compositionally biased region" description="Acidic residues" evidence="7">
    <location>
        <begin position="95"/>
        <end position="105"/>
    </location>
</feature>
<feature type="active site" description="N6-AMP-lysine intermediate" evidence="6">
    <location>
        <position position="416"/>
    </location>
</feature>
<feature type="binding site" evidence="2">
    <location>
        <position position="414"/>
    </location>
    <ligand>
        <name>ATP</name>
        <dbReference type="ChEBI" id="CHEBI:30616"/>
    </ligand>
</feature>
<feature type="binding site" evidence="2">
    <location>
        <position position="416"/>
    </location>
    <ligand>
        <name>ATP</name>
        <dbReference type="ChEBI" id="CHEBI:30616"/>
    </ligand>
</feature>
<feature type="binding site" evidence="1">
    <location>
        <position position="421"/>
    </location>
    <ligand>
        <name>ATP</name>
        <dbReference type="ChEBI" id="CHEBI:30616"/>
    </ligand>
</feature>
<feature type="binding site" evidence="1">
    <location>
        <position position="467"/>
    </location>
    <ligand>
        <name>ATP</name>
        <dbReference type="ChEBI" id="CHEBI:30616"/>
    </ligand>
</feature>
<feature type="binding site" evidence="4">
    <location>
        <position position="467"/>
    </location>
    <ligand>
        <name>Mg(2+)</name>
        <dbReference type="ChEBI" id="CHEBI:18420"/>
        <label>1</label>
    </ligand>
</feature>
<feature type="binding site" evidence="2">
    <location>
        <position position="514"/>
    </location>
    <ligand>
        <name>ATP</name>
        <dbReference type="ChEBI" id="CHEBI:30616"/>
    </ligand>
</feature>
<feature type="binding site" evidence="2">
    <location>
        <position position="574"/>
    </location>
    <ligand>
        <name>ATP</name>
        <dbReference type="ChEBI" id="CHEBI:30616"/>
    </ligand>
</feature>
<feature type="binding site" evidence="4">
    <location>
        <position position="574"/>
    </location>
    <ligand>
        <name>Mg(2+)</name>
        <dbReference type="ChEBI" id="CHEBI:18420"/>
        <label>2</label>
    </ligand>
</feature>
<feature type="binding site" evidence="1">
    <location>
        <position position="579"/>
    </location>
    <ligand>
        <name>ATP</name>
        <dbReference type="ChEBI" id="CHEBI:30616"/>
    </ligand>
</feature>
<feature type="binding site" evidence="1">
    <location>
        <position position="596"/>
    </location>
    <ligand>
        <name>ATP</name>
        <dbReference type="ChEBI" id="CHEBI:30616"/>
    </ligand>
</feature>
<feature type="binding site" evidence="2">
    <location>
        <position position="598"/>
    </location>
    <ligand>
        <name>ATP</name>
        <dbReference type="ChEBI" id="CHEBI:30616"/>
    </ligand>
</feature>
<keyword id="KW-0067">ATP-binding</keyword>
<keyword id="KW-0227">DNA damage</keyword>
<keyword id="KW-0233">DNA recombination</keyword>
<keyword id="KW-0234">DNA repair</keyword>
<keyword id="KW-0436">Ligase</keyword>
<keyword id="KW-0460">Magnesium</keyword>
<keyword id="KW-0479">Metal-binding</keyword>
<keyword id="KW-0547">Nucleotide-binding</keyword>
<keyword id="KW-0539">Nucleus</keyword>
<keyword id="KW-1185">Reference proteome</keyword>
<keyword id="KW-0677">Repeat</keyword>
<protein>
    <recommendedName>
        <fullName>DNA ligase 4</fullName>
        <ecNumber evidence="3">6.5.1.1</ecNumber>
    </recommendedName>
    <alternativeName>
        <fullName>DNA ligase IV</fullName>
    </alternativeName>
    <alternativeName>
        <fullName>Polydeoxyribonucleotide synthase [ATP] 4</fullName>
    </alternativeName>
</protein>
<dbReference type="EC" id="6.5.1.1" evidence="3"/>
<dbReference type="EMBL" id="AAFI02000196">
    <property type="protein sequence ID" value="EAL61054.1"/>
    <property type="molecule type" value="Genomic_DNA"/>
</dbReference>
<dbReference type="RefSeq" id="XP_629472.1">
    <property type="nucleotide sequence ID" value="XM_629470.1"/>
</dbReference>
<dbReference type="SMR" id="Q54CR9"/>
<dbReference type="FunCoup" id="Q54CR9">
    <property type="interactions" value="506"/>
</dbReference>
<dbReference type="STRING" id="44689.Q54CR9"/>
<dbReference type="PaxDb" id="44689-DDB0232255"/>
<dbReference type="EnsemblProtists" id="EAL61054">
    <property type="protein sequence ID" value="EAL61054"/>
    <property type="gene ID" value="DDB_G0292760"/>
</dbReference>
<dbReference type="GeneID" id="8628862"/>
<dbReference type="KEGG" id="ddi:DDB_G0292760"/>
<dbReference type="dictyBase" id="DDB_G0292760">
    <property type="gene designation" value="lig4"/>
</dbReference>
<dbReference type="VEuPathDB" id="AmoebaDB:DDB_G0292760"/>
<dbReference type="eggNOG" id="KOG0966">
    <property type="taxonomic scope" value="Eukaryota"/>
</dbReference>
<dbReference type="HOGENOM" id="CLU_004844_2_0_1"/>
<dbReference type="InParanoid" id="Q54CR9"/>
<dbReference type="OMA" id="EGIMIKH"/>
<dbReference type="PhylomeDB" id="Q54CR9"/>
<dbReference type="Reactome" id="R-DDI-5693571">
    <property type="pathway name" value="Nonhomologous End-Joining (NHEJ)"/>
</dbReference>
<dbReference type="PRO" id="PR:Q54CR9"/>
<dbReference type="Proteomes" id="UP000002195">
    <property type="component" value="Chromosome 6"/>
</dbReference>
<dbReference type="GO" id="GO:0032807">
    <property type="term" value="C:DNA ligase IV complex"/>
    <property type="evidence" value="ECO:0000318"/>
    <property type="project" value="GO_Central"/>
</dbReference>
<dbReference type="GO" id="GO:0005958">
    <property type="term" value="C:DNA-dependent protein kinase-DNA ligase 4 complex"/>
    <property type="evidence" value="ECO:0000250"/>
    <property type="project" value="dictyBase"/>
</dbReference>
<dbReference type="GO" id="GO:0005634">
    <property type="term" value="C:nucleus"/>
    <property type="evidence" value="ECO:0000250"/>
    <property type="project" value="dictyBase"/>
</dbReference>
<dbReference type="GO" id="GO:0005524">
    <property type="term" value="F:ATP binding"/>
    <property type="evidence" value="ECO:0000318"/>
    <property type="project" value="GO_Central"/>
</dbReference>
<dbReference type="GO" id="GO:0003677">
    <property type="term" value="F:DNA binding"/>
    <property type="evidence" value="ECO:0000250"/>
    <property type="project" value="dictyBase"/>
</dbReference>
<dbReference type="GO" id="GO:0003910">
    <property type="term" value="F:DNA ligase (ATP) activity"/>
    <property type="evidence" value="ECO:0000250"/>
    <property type="project" value="dictyBase"/>
</dbReference>
<dbReference type="GO" id="GO:0046872">
    <property type="term" value="F:metal ion binding"/>
    <property type="evidence" value="ECO:0007669"/>
    <property type="project" value="UniProtKB-KW"/>
</dbReference>
<dbReference type="GO" id="GO:0071897">
    <property type="term" value="P:DNA biosynthetic process"/>
    <property type="evidence" value="ECO:0007669"/>
    <property type="project" value="InterPro"/>
</dbReference>
<dbReference type="GO" id="GO:0006310">
    <property type="term" value="P:DNA recombination"/>
    <property type="evidence" value="ECO:0007669"/>
    <property type="project" value="UniProtKB-KW"/>
</dbReference>
<dbReference type="GO" id="GO:0006303">
    <property type="term" value="P:double-strand break repair via nonhomologous end joining"/>
    <property type="evidence" value="ECO:0000318"/>
    <property type="project" value="GO_Central"/>
</dbReference>
<dbReference type="GO" id="GO:0006297">
    <property type="term" value="P:nucleotide-excision repair, DNA gap filling"/>
    <property type="evidence" value="ECO:0000318"/>
    <property type="project" value="GO_Central"/>
</dbReference>
<dbReference type="GO" id="GO:0000012">
    <property type="term" value="P:single strand break repair"/>
    <property type="evidence" value="ECO:0000250"/>
    <property type="project" value="dictyBase"/>
</dbReference>
<dbReference type="CDD" id="cd07903">
    <property type="entry name" value="Adenylation_DNA_ligase_IV"/>
    <property type="match status" value="1"/>
</dbReference>
<dbReference type="CDD" id="cd17722">
    <property type="entry name" value="BRCT_DNA_ligase_IV_rpt1"/>
    <property type="match status" value="1"/>
</dbReference>
<dbReference type="CDD" id="cd17717">
    <property type="entry name" value="BRCT_DNA_ligase_IV_rpt2"/>
    <property type="match status" value="1"/>
</dbReference>
<dbReference type="CDD" id="cd07968">
    <property type="entry name" value="OBF_DNA_ligase_IV"/>
    <property type="match status" value="1"/>
</dbReference>
<dbReference type="FunFam" id="1.10.3260.10:FF:000005">
    <property type="entry name" value="DNA ligase"/>
    <property type="match status" value="1"/>
</dbReference>
<dbReference type="FunFam" id="2.40.50.140:FF:000150">
    <property type="entry name" value="DNA ligase"/>
    <property type="match status" value="1"/>
</dbReference>
<dbReference type="FunFam" id="3.40.50.10190:FF:000044">
    <property type="entry name" value="DNA ligase"/>
    <property type="match status" value="1"/>
</dbReference>
<dbReference type="FunFam" id="3.40.50.10190:FF:000199">
    <property type="entry name" value="DNA ligase 4"/>
    <property type="match status" value="1"/>
</dbReference>
<dbReference type="Gene3D" id="3.40.50.10190">
    <property type="entry name" value="BRCT domain"/>
    <property type="match status" value="2"/>
</dbReference>
<dbReference type="Gene3D" id="1.10.3260.10">
    <property type="entry name" value="DNA ligase, ATP-dependent, N-terminal domain"/>
    <property type="match status" value="1"/>
</dbReference>
<dbReference type="Gene3D" id="3.30.470.30">
    <property type="entry name" value="DNA ligase/mRNA capping enzyme"/>
    <property type="match status" value="1"/>
</dbReference>
<dbReference type="Gene3D" id="2.40.50.140">
    <property type="entry name" value="Nucleic acid-binding proteins"/>
    <property type="match status" value="1"/>
</dbReference>
<dbReference type="InterPro" id="IPR044125">
    <property type="entry name" value="Adenylation_DNA_ligase_IV"/>
</dbReference>
<dbReference type="InterPro" id="IPR001357">
    <property type="entry name" value="BRCT_dom"/>
</dbReference>
<dbReference type="InterPro" id="IPR036420">
    <property type="entry name" value="BRCT_dom_sf"/>
</dbReference>
<dbReference type="InterPro" id="IPR000977">
    <property type="entry name" value="DNA_ligase_ATP-dep"/>
</dbReference>
<dbReference type="InterPro" id="IPR012309">
    <property type="entry name" value="DNA_ligase_ATP-dep_C"/>
</dbReference>
<dbReference type="InterPro" id="IPR012310">
    <property type="entry name" value="DNA_ligase_ATP-dep_cent"/>
</dbReference>
<dbReference type="InterPro" id="IPR012308">
    <property type="entry name" value="DNA_ligase_ATP-dep_N"/>
</dbReference>
<dbReference type="InterPro" id="IPR021536">
    <property type="entry name" value="DNA_ligase_IV_dom"/>
</dbReference>
<dbReference type="InterPro" id="IPR036599">
    <property type="entry name" value="DNA_ligase_N_sf"/>
</dbReference>
<dbReference type="InterPro" id="IPR029710">
    <property type="entry name" value="LIG4"/>
</dbReference>
<dbReference type="InterPro" id="IPR012340">
    <property type="entry name" value="NA-bd_OB-fold"/>
</dbReference>
<dbReference type="NCBIfam" id="TIGR00574">
    <property type="entry name" value="dnl1"/>
    <property type="match status" value="1"/>
</dbReference>
<dbReference type="PANTHER" id="PTHR45997">
    <property type="entry name" value="DNA LIGASE 4"/>
    <property type="match status" value="1"/>
</dbReference>
<dbReference type="PANTHER" id="PTHR45997:SF1">
    <property type="entry name" value="DNA LIGASE 4"/>
    <property type="match status" value="1"/>
</dbReference>
<dbReference type="Pfam" id="PF00533">
    <property type="entry name" value="BRCT"/>
    <property type="match status" value="1"/>
</dbReference>
<dbReference type="Pfam" id="PF04679">
    <property type="entry name" value="DNA_ligase_A_C"/>
    <property type="match status" value="1"/>
</dbReference>
<dbReference type="Pfam" id="PF01068">
    <property type="entry name" value="DNA_ligase_A_M"/>
    <property type="match status" value="1"/>
</dbReference>
<dbReference type="Pfam" id="PF04675">
    <property type="entry name" value="DNA_ligase_A_N"/>
    <property type="match status" value="1"/>
</dbReference>
<dbReference type="Pfam" id="PF11411">
    <property type="entry name" value="DNA_ligase_IV"/>
    <property type="match status" value="1"/>
</dbReference>
<dbReference type="SMART" id="SM00292">
    <property type="entry name" value="BRCT"/>
    <property type="match status" value="2"/>
</dbReference>
<dbReference type="SUPFAM" id="SSF117018">
    <property type="entry name" value="ATP-dependent DNA ligase DNA-binding domain"/>
    <property type="match status" value="1"/>
</dbReference>
<dbReference type="SUPFAM" id="SSF52113">
    <property type="entry name" value="BRCT domain"/>
    <property type="match status" value="2"/>
</dbReference>
<dbReference type="SUPFAM" id="SSF56091">
    <property type="entry name" value="DNA ligase/mRNA capping enzyme, catalytic domain"/>
    <property type="match status" value="1"/>
</dbReference>
<dbReference type="SUPFAM" id="SSF50249">
    <property type="entry name" value="Nucleic acid-binding proteins"/>
    <property type="match status" value="1"/>
</dbReference>
<dbReference type="PROSITE" id="PS50172">
    <property type="entry name" value="BRCT"/>
    <property type="match status" value="2"/>
</dbReference>
<dbReference type="PROSITE" id="PS50160">
    <property type="entry name" value="DNA_LIGASE_A3"/>
    <property type="match status" value="1"/>
</dbReference>
<sequence>MALSLYYDEDDDENENENKDKPNNDFKNQQQINTSKTTNNNNNINNKNNYNNKFNDDDIFNNDKIITKPRVTTTTTTTKNTSTNSNINKTKFNDDDIFDDEDEDSNSNKTTTTTTTTTTTTDTIITNDYRYQKTVPFSSFCDLMNRIINDTKISNKKNYLEKFMNHYKDEPNNFYQLLRLILPQLDKDRNSYGLKEKTLARLYVELLNISPESVDAMRLLNWKKSTNDEIGGDFGTAVYLSLKNRCNNDNGRIKVSMGDINESLDQLSQPLTDKKTKVSILKKVLRSTTAQEQKWFVRIILKEMKNGLSDNITLKFFHPDAIDHFNITSNLRLVCTNLFYMTQSKQKELKDKQKLEEKENLLKQQQQQQNDLDIYKLEIKLFNPIKPMLANRQSIDNLSMILNSAISATQFVVEKKFDGERIQIHKDGEQVKYFSRNSNDSTGIYGSMFTPIVKECVLAERCILDGELIVWDSISQRFEDFGNLKTLALNKDGISGSGDPLGINYGKQLCFIAFDILFVKDQSVMNLPLMQRLMLLKRCVTIKSKQFEISEQTTVNSISQIISLLESAIINREEGLMLKNLHSLYVPAERKDKWVKIKPEYIDGMGNGADDLDLVIIGGYYGSGLNRRGGTISHFMLGVPFIADSTDTDIDDESTFDKNVIFYSFCKVGSGYTDIQLKSLQKDLDPHWNNFSTSKPPSIIQLAEPFKEKPDVWIDPRVYSKVLQIKASQIVVTDKYKCGYTLRFPRVLKIRDDKGWKDCCSHEEIIDLFTNYSTNLNFKRDHEYGDGSGGKNKKLKKSKKTTNQLLADSGLKVLSIFQDTDTSGIIPTQNIFQGIEICVIKGSSGEYTKSKLEIMIVEMGGSKVQYPSRNTNYVISSKEVVKIQNLIQSGFIDIVSFNWIVDCYNEKRLVPLGPKYMIFSTESTKKRFLLDSDQFGDSYINETTEQSLKDSFNQIDKLKLKKQLSINSTTTTTTTSISKYFSNCWWSLFKEFTFYLDLYQVVGEKSTLIENNNLELSNLNIQFYGGKISIEFNNKITHVVLDSLDLSRITFIKNKINSLSLPIQIVTTNWIQLSINNYSIQPILEILD</sequence>
<reference key="1">
    <citation type="journal article" date="2005" name="Nature">
        <title>The genome of the social amoeba Dictyostelium discoideum.</title>
        <authorList>
            <person name="Eichinger L."/>
            <person name="Pachebat J.A."/>
            <person name="Gloeckner G."/>
            <person name="Rajandream M.A."/>
            <person name="Sucgang R."/>
            <person name="Berriman M."/>
            <person name="Song J."/>
            <person name="Olsen R."/>
            <person name="Szafranski K."/>
            <person name="Xu Q."/>
            <person name="Tunggal B."/>
            <person name="Kummerfeld S."/>
            <person name="Madera M."/>
            <person name="Konfortov B.A."/>
            <person name="Rivero F."/>
            <person name="Bankier A.T."/>
            <person name="Lehmann R."/>
            <person name="Hamlin N."/>
            <person name="Davies R."/>
            <person name="Gaudet P."/>
            <person name="Fey P."/>
            <person name="Pilcher K."/>
            <person name="Chen G."/>
            <person name="Saunders D."/>
            <person name="Sodergren E.J."/>
            <person name="Davis P."/>
            <person name="Kerhornou A."/>
            <person name="Nie X."/>
            <person name="Hall N."/>
            <person name="Anjard C."/>
            <person name="Hemphill L."/>
            <person name="Bason N."/>
            <person name="Farbrother P."/>
            <person name="Desany B."/>
            <person name="Just E."/>
            <person name="Morio T."/>
            <person name="Rost R."/>
            <person name="Churcher C.M."/>
            <person name="Cooper J."/>
            <person name="Haydock S."/>
            <person name="van Driessche N."/>
            <person name="Cronin A."/>
            <person name="Goodhead I."/>
            <person name="Muzny D.M."/>
            <person name="Mourier T."/>
            <person name="Pain A."/>
            <person name="Lu M."/>
            <person name="Harper D."/>
            <person name="Lindsay R."/>
            <person name="Hauser H."/>
            <person name="James K.D."/>
            <person name="Quiles M."/>
            <person name="Madan Babu M."/>
            <person name="Saito T."/>
            <person name="Buchrieser C."/>
            <person name="Wardroper A."/>
            <person name="Felder M."/>
            <person name="Thangavelu M."/>
            <person name="Johnson D."/>
            <person name="Knights A."/>
            <person name="Loulseged H."/>
            <person name="Mungall K.L."/>
            <person name="Oliver K."/>
            <person name="Price C."/>
            <person name="Quail M.A."/>
            <person name="Urushihara H."/>
            <person name="Hernandez J."/>
            <person name="Rabbinowitsch E."/>
            <person name="Steffen D."/>
            <person name="Sanders M."/>
            <person name="Ma J."/>
            <person name="Kohara Y."/>
            <person name="Sharp S."/>
            <person name="Simmonds M.N."/>
            <person name="Spiegler S."/>
            <person name="Tivey A."/>
            <person name="Sugano S."/>
            <person name="White B."/>
            <person name="Walker D."/>
            <person name="Woodward J.R."/>
            <person name="Winckler T."/>
            <person name="Tanaka Y."/>
            <person name="Shaulsky G."/>
            <person name="Schleicher M."/>
            <person name="Weinstock G.M."/>
            <person name="Rosenthal A."/>
            <person name="Cox E.C."/>
            <person name="Chisholm R.L."/>
            <person name="Gibbs R.A."/>
            <person name="Loomis W.F."/>
            <person name="Platzer M."/>
            <person name="Kay R.R."/>
            <person name="Williams J.G."/>
            <person name="Dear P.H."/>
            <person name="Noegel A.A."/>
            <person name="Barrell B.G."/>
            <person name="Kuspa A."/>
        </authorList>
    </citation>
    <scope>NUCLEOTIDE SEQUENCE [LARGE SCALE GENOMIC DNA]</scope>
    <source>
        <strain>AX4</strain>
    </source>
</reference>
<proteinExistence type="inferred from homology"/>
<gene>
    <name type="primary">lig4</name>
    <name type="ORF">DDB_G0292760</name>
</gene>
<comment type="function">
    <text evidence="3">DNA ligase involved in DNA non-homologous end joining (NHEJ); required for double-strand break (DSB) repair.</text>
</comment>
<comment type="catalytic activity">
    <reaction evidence="3">
        <text>ATP + (deoxyribonucleotide)n-3'-hydroxyl + 5'-phospho-(deoxyribonucleotide)m = (deoxyribonucleotide)n+m + AMP + diphosphate.</text>
        <dbReference type="EC" id="6.5.1.1"/>
    </reaction>
</comment>
<comment type="cofactor">
    <cofactor evidence="2">
        <name>Mg(2+)</name>
        <dbReference type="ChEBI" id="CHEBI:18420"/>
    </cofactor>
</comment>
<comment type="subcellular location">
    <subcellularLocation>
        <location evidence="3">Nucleus</location>
    </subcellularLocation>
</comment>
<comment type="similarity">
    <text evidence="8">Belongs to the ATP-dependent DNA ligase family.</text>
</comment>